<reference key="1">
    <citation type="journal article" date="2008" name="Genome Res.">
        <title>Chlamydia trachomatis: genome sequence analysis of lymphogranuloma venereum isolates.</title>
        <authorList>
            <person name="Thomson N.R."/>
            <person name="Holden M.T.G."/>
            <person name="Carder C."/>
            <person name="Lennard N."/>
            <person name="Lockey S.J."/>
            <person name="Marsh P."/>
            <person name="Skipp P."/>
            <person name="O'Connor C.D."/>
            <person name="Goodhead I."/>
            <person name="Norbertzcak H."/>
            <person name="Harris B."/>
            <person name="Ormond D."/>
            <person name="Rance R."/>
            <person name="Quail M.A."/>
            <person name="Parkhill J."/>
            <person name="Stephens R.S."/>
            <person name="Clarke I.N."/>
        </authorList>
    </citation>
    <scope>NUCLEOTIDE SEQUENCE [LARGE SCALE GENOMIC DNA]</scope>
    <source>
        <strain>ATCC VR-902B / DSM 19102 / 434/Bu</strain>
    </source>
</reference>
<comment type="function">
    <text evidence="1">Catalyzes the formation of 6,7-dimethyl-8-ribityllumazine by condensation of 5-amino-6-(D-ribitylamino)uracil with 3,4-dihydroxy-2-butanone 4-phosphate. This is the penultimate step in the biosynthesis of riboflavin.</text>
</comment>
<comment type="catalytic activity">
    <reaction evidence="1">
        <text>(2S)-2-hydroxy-3-oxobutyl phosphate + 5-amino-6-(D-ribitylamino)uracil = 6,7-dimethyl-8-(1-D-ribityl)lumazine + phosphate + 2 H2O + H(+)</text>
        <dbReference type="Rhea" id="RHEA:26152"/>
        <dbReference type="ChEBI" id="CHEBI:15377"/>
        <dbReference type="ChEBI" id="CHEBI:15378"/>
        <dbReference type="ChEBI" id="CHEBI:15934"/>
        <dbReference type="ChEBI" id="CHEBI:43474"/>
        <dbReference type="ChEBI" id="CHEBI:58201"/>
        <dbReference type="ChEBI" id="CHEBI:58830"/>
        <dbReference type="EC" id="2.5.1.78"/>
    </reaction>
</comment>
<comment type="pathway">
    <text evidence="1">Cofactor biosynthesis; riboflavin biosynthesis; riboflavin from 2-hydroxy-3-oxobutyl phosphate and 5-amino-6-(D-ribitylamino)uracil: step 1/2.</text>
</comment>
<comment type="similarity">
    <text evidence="1">Belongs to the DMRL synthase family.</text>
</comment>
<proteinExistence type="inferred from homology"/>
<accession>B0B8V8</accession>
<keyword id="KW-0686">Riboflavin biosynthesis</keyword>
<keyword id="KW-0808">Transferase</keyword>
<protein>
    <recommendedName>
        <fullName evidence="1">6,7-dimethyl-8-ribityllumazine synthase</fullName>
        <shortName evidence="1">DMRL synthase</shortName>
        <shortName evidence="1">LS</shortName>
        <shortName evidence="1">Lumazine synthase</shortName>
        <ecNumber evidence="1">2.5.1.78</ecNumber>
    </recommendedName>
</protein>
<organism>
    <name type="scientific">Chlamydia trachomatis serovar L2 (strain ATCC VR-902B / DSM 19102 / 434/Bu)</name>
    <dbReference type="NCBI Taxonomy" id="471472"/>
    <lineage>
        <taxon>Bacteria</taxon>
        <taxon>Pseudomonadati</taxon>
        <taxon>Chlamydiota</taxon>
        <taxon>Chlamydiia</taxon>
        <taxon>Chlamydiales</taxon>
        <taxon>Chlamydiaceae</taxon>
        <taxon>Chlamydia/Chlamydophila group</taxon>
        <taxon>Chlamydia</taxon>
    </lineage>
</organism>
<sequence>MKPLKGCPVAKDVRVAIVGSCFNSPIADRLVAGAQETFFDFGGDPSSLTIVRVPGAFEIPCAIKKLLSTSGQFHAVVACGVLIQGETSHYEHIADSVAAGVSRLSLDFCLPITFSVITAPNMEAAWERAGIKGPNLGASGMKTALEMASLFSLIGKE</sequence>
<evidence type="ECO:0000255" key="1">
    <source>
        <dbReference type="HAMAP-Rule" id="MF_00178"/>
    </source>
</evidence>
<name>RISB_CHLT2</name>
<feature type="chain" id="PRO_1000098173" description="6,7-dimethyl-8-ribityllumazine synthase">
    <location>
        <begin position="1"/>
        <end position="157"/>
    </location>
</feature>
<feature type="active site" description="Proton donor" evidence="1">
    <location>
        <position position="89"/>
    </location>
</feature>
<feature type="binding site" evidence="1">
    <location>
        <position position="22"/>
    </location>
    <ligand>
        <name>5-amino-6-(D-ribitylamino)uracil</name>
        <dbReference type="ChEBI" id="CHEBI:15934"/>
    </ligand>
</feature>
<feature type="binding site" evidence="1">
    <location>
        <begin position="56"/>
        <end position="58"/>
    </location>
    <ligand>
        <name>5-amino-6-(D-ribitylamino)uracil</name>
        <dbReference type="ChEBI" id="CHEBI:15934"/>
    </ligand>
</feature>
<feature type="binding site" evidence="1">
    <location>
        <begin position="81"/>
        <end position="83"/>
    </location>
    <ligand>
        <name>5-amino-6-(D-ribitylamino)uracil</name>
        <dbReference type="ChEBI" id="CHEBI:15934"/>
    </ligand>
</feature>
<feature type="binding site" evidence="1">
    <location>
        <begin position="86"/>
        <end position="87"/>
    </location>
    <ligand>
        <name>(2S)-2-hydroxy-3-oxobutyl phosphate</name>
        <dbReference type="ChEBI" id="CHEBI:58830"/>
    </ligand>
</feature>
<feature type="binding site" evidence="1">
    <location>
        <position position="114"/>
    </location>
    <ligand>
        <name>5-amino-6-(D-ribitylamino)uracil</name>
        <dbReference type="ChEBI" id="CHEBI:15934"/>
    </ligand>
</feature>
<feature type="binding site" evidence="1">
    <location>
        <position position="128"/>
    </location>
    <ligand>
        <name>(2S)-2-hydroxy-3-oxobutyl phosphate</name>
        <dbReference type="ChEBI" id="CHEBI:58830"/>
    </ligand>
</feature>
<gene>
    <name evidence="1" type="primary">ribH</name>
    <name type="ordered locus">CTL0101</name>
</gene>
<dbReference type="EC" id="2.5.1.78" evidence="1"/>
<dbReference type="EMBL" id="AM884176">
    <property type="protein sequence ID" value="CAP03545.1"/>
    <property type="molecule type" value="Genomic_DNA"/>
</dbReference>
<dbReference type="RefSeq" id="WP_009872109.1">
    <property type="nucleotide sequence ID" value="NC_010287.1"/>
</dbReference>
<dbReference type="RefSeq" id="YP_001654192.1">
    <property type="nucleotide sequence ID" value="NC_010287.1"/>
</dbReference>
<dbReference type="SMR" id="B0B8V8"/>
<dbReference type="KEGG" id="ctb:CTL0101"/>
<dbReference type="PATRIC" id="fig|471472.4.peg.110"/>
<dbReference type="HOGENOM" id="CLU_089358_1_1_0"/>
<dbReference type="UniPathway" id="UPA00275">
    <property type="reaction ID" value="UER00404"/>
</dbReference>
<dbReference type="Proteomes" id="UP001154402">
    <property type="component" value="Chromosome"/>
</dbReference>
<dbReference type="GO" id="GO:0005829">
    <property type="term" value="C:cytosol"/>
    <property type="evidence" value="ECO:0007669"/>
    <property type="project" value="TreeGrafter"/>
</dbReference>
<dbReference type="GO" id="GO:0009349">
    <property type="term" value="C:riboflavin synthase complex"/>
    <property type="evidence" value="ECO:0007669"/>
    <property type="project" value="InterPro"/>
</dbReference>
<dbReference type="GO" id="GO:0000906">
    <property type="term" value="F:6,7-dimethyl-8-ribityllumazine synthase activity"/>
    <property type="evidence" value="ECO:0007669"/>
    <property type="project" value="UniProtKB-UniRule"/>
</dbReference>
<dbReference type="GO" id="GO:0009231">
    <property type="term" value="P:riboflavin biosynthetic process"/>
    <property type="evidence" value="ECO:0007669"/>
    <property type="project" value="UniProtKB-UniRule"/>
</dbReference>
<dbReference type="CDD" id="cd09209">
    <property type="entry name" value="Lumazine_synthase-I"/>
    <property type="match status" value="1"/>
</dbReference>
<dbReference type="Gene3D" id="3.40.50.960">
    <property type="entry name" value="Lumazine/riboflavin synthase"/>
    <property type="match status" value="1"/>
</dbReference>
<dbReference type="HAMAP" id="MF_00178">
    <property type="entry name" value="Lumazine_synth"/>
    <property type="match status" value="1"/>
</dbReference>
<dbReference type="InterPro" id="IPR034964">
    <property type="entry name" value="LS"/>
</dbReference>
<dbReference type="InterPro" id="IPR002180">
    <property type="entry name" value="LS/RS"/>
</dbReference>
<dbReference type="InterPro" id="IPR036467">
    <property type="entry name" value="LS/RS_sf"/>
</dbReference>
<dbReference type="NCBIfam" id="TIGR00114">
    <property type="entry name" value="lumazine-synth"/>
    <property type="match status" value="1"/>
</dbReference>
<dbReference type="PANTHER" id="PTHR21058:SF0">
    <property type="entry name" value="6,7-DIMETHYL-8-RIBITYLLUMAZINE SYNTHASE"/>
    <property type="match status" value="1"/>
</dbReference>
<dbReference type="PANTHER" id="PTHR21058">
    <property type="entry name" value="6,7-DIMETHYL-8-RIBITYLLUMAZINE SYNTHASE DMRL SYNTHASE LUMAZINE SYNTHASE"/>
    <property type="match status" value="1"/>
</dbReference>
<dbReference type="Pfam" id="PF00885">
    <property type="entry name" value="DMRL_synthase"/>
    <property type="match status" value="1"/>
</dbReference>
<dbReference type="SUPFAM" id="SSF52121">
    <property type="entry name" value="Lumazine synthase"/>
    <property type="match status" value="1"/>
</dbReference>